<reference key="1">
    <citation type="journal article" date="2007" name="Nat. Biotechnol.">
        <title>Genome sequencing and analysis of the versatile cell factory Aspergillus niger CBS 513.88.</title>
        <authorList>
            <person name="Pel H.J."/>
            <person name="de Winde J.H."/>
            <person name="Archer D.B."/>
            <person name="Dyer P.S."/>
            <person name="Hofmann G."/>
            <person name="Schaap P.J."/>
            <person name="Turner G."/>
            <person name="de Vries R.P."/>
            <person name="Albang R."/>
            <person name="Albermann K."/>
            <person name="Andersen M.R."/>
            <person name="Bendtsen J.D."/>
            <person name="Benen J.A.E."/>
            <person name="van den Berg M."/>
            <person name="Breestraat S."/>
            <person name="Caddick M.X."/>
            <person name="Contreras R."/>
            <person name="Cornell M."/>
            <person name="Coutinho P.M."/>
            <person name="Danchin E.G.J."/>
            <person name="Debets A.J.M."/>
            <person name="Dekker P."/>
            <person name="van Dijck P.W.M."/>
            <person name="van Dijk A."/>
            <person name="Dijkhuizen L."/>
            <person name="Driessen A.J.M."/>
            <person name="d'Enfert C."/>
            <person name="Geysens S."/>
            <person name="Goosen C."/>
            <person name="Groot G.S.P."/>
            <person name="de Groot P.W.J."/>
            <person name="Guillemette T."/>
            <person name="Henrissat B."/>
            <person name="Herweijer M."/>
            <person name="van den Hombergh J.P.T.W."/>
            <person name="van den Hondel C.A.M.J.J."/>
            <person name="van der Heijden R.T.J.M."/>
            <person name="van der Kaaij R.M."/>
            <person name="Klis F.M."/>
            <person name="Kools H.J."/>
            <person name="Kubicek C.P."/>
            <person name="van Kuyk P.A."/>
            <person name="Lauber J."/>
            <person name="Lu X."/>
            <person name="van der Maarel M.J.E.C."/>
            <person name="Meulenberg R."/>
            <person name="Menke H."/>
            <person name="Mortimer M.A."/>
            <person name="Nielsen J."/>
            <person name="Oliver S.G."/>
            <person name="Olsthoorn M."/>
            <person name="Pal K."/>
            <person name="van Peij N.N.M.E."/>
            <person name="Ram A.F.J."/>
            <person name="Rinas U."/>
            <person name="Roubos J.A."/>
            <person name="Sagt C.M.J."/>
            <person name="Schmoll M."/>
            <person name="Sun J."/>
            <person name="Ussery D."/>
            <person name="Varga J."/>
            <person name="Vervecken W."/>
            <person name="van de Vondervoort P.J.J."/>
            <person name="Wedler H."/>
            <person name="Woesten H.A.B."/>
            <person name="Zeng A.-P."/>
            <person name="van Ooyen A.J.J."/>
            <person name="Visser J."/>
            <person name="Stam H."/>
        </authorList>
    </citation>
    <scope>NUCLEOTIDE SEQUENCE [LARGE SCALE GENOMIC DNA]</scope>
    <source>
        <strain>ATCC MYA-4892 / CBS 513.88 / FGSC A1513</strain>
    </source>
</reference>
<organism>
    <name type="scientific">Aspergillus niger (strain ATCC MYA-4892 / CBS 513.88 / FGSC A1513)</name>
    <dbReference type="NCBI Taxonomy" id="425011"/>
    <lineage>
        <taxon>Eukaryota</taxon>
        <taxon>Fungi</taxon>
        <taxon>Dikarya</taxon>
        <taxon>Ascomycota</taxon>
        <taxon>Pezizomycotina</taxon>
        <taxon>Eurotiomycetes</taxon>
        <taxon>Eurotiomycetidae</taxon>
        <taxon>Eurotiales</taxon>
        <taxon>Aspergillaceae</taxon>
        <taxon>Aspergillus</taxon>
        <taxon>Aspergillus subgen. Circumdati</taxon>
    </lineage>
</organism>
<comment type="function">
    <text evidence="1">Catalyzes the reversible transfer of the terminal phosphate group between ATP and AMP. Plays an important role in cellular energy homeostasis and in adenine nucleotide metabolism. Adenylate kinase activity is critical for regulation of the phosphate utilization and the AMP de novo biosynthesis pathways.</text>
</comment>
<comment type="catalytic activity">
    <reaction evidence="1">
        <text>AMP + ATP = 2 ADP</text>
        <dbReference type="Rhea" id="RHEA:12973"/>
        <dbReference type="ChEBI" id="CHEBI:30616"/>
        <dbReference type="ChEBI" id="CHEBI:456215"/>
        <dbReference type="ChEBI" id="CHEBI:456216"/>
        <dbReference type="EC" id="2.7.4.3"/>
    </reaction>
</comment>
<comment type="subunit">
    <text evidence="1">Monomer.</text>
</comment>
<comment type="subcellular location">
    <subcellularLocation>
        <location evidence="1">Cytoplasm</location>
        <location evidence="1">Cytosol</location>
    </subcellularLocation>
    <subcellularLocation>
        <location evidence="1">Mitochondrion intermembrane space</location>
    </subcellularLocation>
    <text evidence="1">Predominantly mitochondrial.</text>
</comment>
<comment type="domain">
    <text evidence="1">Consists of three domains, a large central CORE domain and two small peripheral domains, NMPbind and LID, which undergo movements during catalysis. The LID domain closes over the site of phosphoryl transfer upon ATP binding. Assembling and dissambling the active center during each catalytic cycle provides an effective means to prevent ATP hydrolysis.</text>
</comment>
<comment type="similarity">
    <text evidence="1">Belongs to the adenylate kinase family. AK2 subfamily.</text>
</comment>
<sequence>MAPITDEVVNGLKDTIGKLEARVEELEGRLSNQVKPKSVAEQMRIILMGPPGAGKGTQAPRLKEKYCVCHLATGDMLRSQVAKKTALGKEAKKIMDQGGLVSDEIMVNMIQSELDNNAECKNGFILDGFPRTVAQAERLDDMLNARQQKLQHAVELQIDDALLVARITGRLVHPASGRSYHKIFNPPKEEMKDDVTGEPLIQRSDDNADTLKKRLGTYHAQTAPVVEYYKKTGIWRGIDASQEPGQVWKSLLGVFRQN</sequence>
<proteinExistence type="inferred from homology"/>
<accession>A2QPN9</accession>
<protein>
    <recommendedName>
        <fullName evidence="1">Adenylate kinase</fullName>
        <ecNumber evidence="1">2.7.4.3</ecNumber>
    </recommendedName>
    <alternativeName>
        <fullName evidence="1">ATP-AMP transphosphorylase</fullName>
    </alternativeName>
    <alternativeName>
        <fullName evidence="1">ATP:AMP phosphotransferase</fullName>
    </alternativeName>
    <alternativeName>
        <fullName evidence="1">Adenylate kinase cytosolic and mitochondrial</fullName>
    </alternativeName>
    <alternativeName>
        <fullName evidence="1">Adenylate monophosphate kinase</fullName>
    </alternativeName>
</protein>
<dbReference type="EC" id="2.7.4.3" evidence="1"/>
<dbReference type="EMBL" id="AM270155">
    <property type="protein sequence ID" value="CAK45139.1"/>
    <property type="molecule type" value="Genomic_DNA"/>
</dbReference>
<dbReference type="RefSeq" id="XP_001392085.1">
    <property type="nucleotide sequence ID" value="XM_001392048.2"/>
</dbReference>
<dbReference type="SMR" id="A2QPN9"/>
<dbReference type="EnsemblFungi" id="CAK45139">
    <property type="protein sequence ID" value="CAK45139"/>
    <property type="gene ID" value="An07g10100"/>
</dbReference>
<dbReference type="GeneID" id="4982279"/>
<dbReference type="KEGG" id="ang:An07g10100"/>
<dbReference type="VEuPathDB" id="FungiDB:An07g10100"/>
<dbReference type="HOGENOM" id="CLU_032354_1_0_1"/>
<dbReference type="Proteomes" id="UP000006706">
    <property type="component" value="Chromosome 4L"/>
</dbReference>
<dbReference type="GO" id="GO:0005829">
    <property type="term" value="C:cytosol"/>
    <property type="evidence" value="ECO:0007669"/>
    <property type="project" value="UniProtKB-SubCell"/>
</dbReference>
<dbReference type="GO" id="GO:0005758">
    <property type="term" value="C:mitochondrial intermembrane space"/>
    <property type="evidence" value="ECO:0007669"/>
    <property type="project" value="UniProtKB-SubCell"/>
</dbReference>
<dbReference type="GO" id="GO:0004017">
    <property type="term" value="F:adenylate kinase activity"/>
    <property type="evidence" value="ECO:0007669"/>
    <property type="project" value="UniProtKB-UniRule"/>
</dbReference>
<dbReference type="GO" id="GO:0016208">
    <property type="term" value="F:AMP binding"/>
    <property type="evidence" value="ECO:0007669"/>
    <property type="project" value="EnsemblFungi"/>
</dbReference>
<dbReference type="GO" id="GO:0005524">
    <property type="term" value="F:ATP binding"/>
    <property type="evidence" value="ECO:0007669"/>
    <property type="project" value="UniProtKB-KW"/>
</dbReference>
<dbReference type="GO" id="GO:0003688">
    <property type="term" value="F:DNA replication origin binding"/>
    <property type="evidence" value="ECO:0007669"/>
    <property type="project" value="EnsemblFungi"/>
</dbReference>
<dbReference type="GO" id="GO:0006172">
    <property type="term" value="P:ADP biosynthetic process"/>
    <property type="evidence" value="ECO:0007669"/>
    <property type="project" value="UniProtKB-UniRule"/>
</dbReference>
<dbReference type="GO" id="GO:0046033">
    <property type="term" value="P:AMP metabolic process"/>
    <property type="evidence" value="ECO:0007669"/>
    <property type="project" value="UniProtKB-UniRule"/>
</dbReference>
<dbReference type="GO" id="GO:0046034">
    <property type="term" value="P:ATP metabolic process"/>
    <property type="evidence" value="ECO:0007669"/>
    <property type="project" value="UniProtKB-UniRule"/>
</dbReference>
<dbReference type="GO" id="GO:0006270">
    <property type="term" value="P:DNA replication initiation"/>
    <property type="evidence" value="ECO:0007669"/>
    <property type="project" value="EnsemblFungi"/>
</dbReference>
<dbReference type="GO" id="GO:0036388">
    <property type="term" value="P:pre-replicative complex assembly"/>
    <property type="evidence" value="ECO:0007669"/>
    <property type="project" value="EnsemblFungi"/>
</dbReference>
<dbReference type="CDD" id="cd01428">
    <property type="entry name" value="ADK"/>
    <property type="match status" value="1"/>
</dbReference>
<dbReference type="FunFam" id="3.40.50.300:FF:000106">
    <property type="entry name" value="Adenylate kinase mitochondrial"/>
    <property type="match status" value="1"/>
</dbReference>
<dbReference type="Gene3D" id="3.40.50.300">
    <property type="entry name" value="P-loop containing nucleotide triphosphate hydrolases"/>
    <property type="match status" value="1"/>
</dbReference>
<dbReference type="HAMAP" id="MF_00235">
    <property type="entry name" value="Adenylate_kinase_Adk"/>
    <property type="match status" value="1"/>
</dbReference>
<dbReference type="HAMAP" id="MF_03168">
    <property type="entry name" value="Adenylate_kinase_AK2"/>
    <property type="match status" value="1"/>
</dbReference>
<dbReference type="InterPro" id="IPR006259">
    <property type="entry name" value="Adenyl_kin_sub"/>
</dbReference>
<dbReference type="InterPro" id="IPR000850">
    <property type="entry name" value="Adenylat/UMP-CMP_kin"/>
</dbReference>
<dbReference type="InterPro" id="IPR033690">
    <property type="entry name" value="Adenylat_kinase_CS"/>
</dbReference>
<dbReference type="InterPro" id="IPR007862">
    <property type="entry name" value="Adenylate_kinase_lid-dom"/>
</dbReference>
<dbReference type="InterPro" id="IPR028587">
    <property type="entry name" value="AK2"/>
</dbReference>
<dbReference type="InterPro" id="IPR027417">
    <property type="entry name" value="P-loop_NTPase"/>
</dbReference>
<dbReference type="NCBIfam" id="TIGR01351">
    <property type="entry name" value="adk"/>
    <property type="match status" value="1"/>
</dbReference>
<dbReference type="NCBIfam" id="NF001380">
    <property type="entry name" value="PRK00279.1-2"/>
    <property type="match status" value="1"/>
</dbReference>
<dbReference type="NCBIfam" id="NF001381">
    <property type="entry name" value="PRK00279.1-3"/>
    <property type="match status" value="1"/>
</dbReference>
<dbReference type="NCBIfam" id="NF011100">
    <property type="entry name" value="PRK14527.1"/>
    <property type="match status" value="1"/>
</dbReference>
<dbReference type="PANTHER" id="PTHR23359">
    <property type="entry name" value="NUCLEOTIDE KINASE"/>
    <property type="match status" value="1"/>
</dbReference>
<dbReference type="Pfam" id="PF00406">
    <property type="entry name" value="ADK"/>
    <property type="match status" value="1"/>
</dbReference>
<dbReference type="Pfam" id="PF05191">
    <property type="entry name" value="ADK_lid"/>
    <property type="match status" value="1"/>
</dbReference>
<dbReference type="PRINTS" id="PR00094">
    <property type="entry name" value="ADENYLTKNASE"/>
</dbReference>
<dbReference type="SUPFAM" id="SSF52540">
    <property type="entry name" value="P-loop containing nucleoside triphosphate hydrolases"/>
    <property type="match status" value="1"/>
</dbReference>
<dbReference type="PROSITE" id="PS00113">
    <property type="entry name" value="ADENYLATE_KINASE"/>
    <property type="match status" value="1"/>
</dbReference>
<gene>
    <name type="primary">adk1</name>
    <name type="ORF">An07g10100</name>
</gene>
<feature type="chain" id="PRO_0000365662" description="Adenylate kinase">
    <location>
        <begin position="1"/>
        <end position="258"/>
    </location>
</feature>
<feature type="region of interest" description="NMP" evidence="1">
    <location>
        <begin position="72"/>
        <end position="101"/>
    </location>
</feature>
<feature type="region of interest" description="LID" evidence="1">
    <location>
        <begin position="169"/>
        <end position="206"/>
    </location>
</feature>
<feature type="binding site" evidence="1">
    <location>
        <begin position="52"/>
        <end position="57"/>
    </location>
    <ligand>
        <name>ATP</name>
        <dbReference type="ChEBI" id="CHEBI:30616"/>
    </ligand>
</feature>
<feature type="binding site" evidence="1">
    <location>
        <position position="73"/>
    </location>
    <ligand>
        <name>AMP</name>
        <dbReference type="ChEBI" id="CHEBI:456215"/>
    </ligand>
</feature>
<feature type="binding site" evidence="1">
    <location>
        <position position="78"/>
    </location>
    <ligand>
        <name>AMP</name>
        <dbReference type="ChEBI" id="CHEBI:456215"/>
    </ligand>
</feature>
<feature type="binding site" evidence="1">
    <location>
        <begin position="99"/>
        <end position="101"/>
    </location>
    <ligand>
        <name>AMP</name>
        <dbReference type="ChEBI" id="CHEBI:456215"/>
    </ligand>
</feature>
<feature type="binding site" evidence="1">
    <location>
        <begin position="128"/>
        <end position="131"/>
    </location>
    <ligand>
        <name>AMP</name>
        <dbReference type="ChEBI" id="CHEBI:456215"/>
    </ligand>
</feature>
<feature type="binding site" evidence="1">
    <location>
        <position position="135"/>
    </location>
    <ligand>
        <name>AMP</name>
        <dbReference type="ChEBI" id="CHEBI:456215"/>
    </ligand>
</feature>
<feature type="binding site" evidence="1">
    <location>
        <position position="170"/>
    </location>
    <ligand>
        <name>ATP</name>
        <dbReference type="ChEBI" id="CHEBI:30616"/>
    </ligand>
</feature>
<feature type="binding site" evidence="1">
    <location>
        <begin position="179"/>
        <end position="180"/>
    </location>
    <ligand>
        <name>ATP</name>
        <dbReference type="ChEBI" id="CHEBI:30616"/>
    </ligand>
</feature>
<feature type="binding site" evidence="1">
    <location>
        <position position="203"/>
    </location>
    <ligand>
        <name>AMP</name>
        <dbReference type="ChEBI" id="CHEBI:456215"/>
    </ligand>
</feature>
<feature type="binding site" evidence="1">
    <location>
        <position position="214"/>
    </location>
    <ligand>
        <name>AMP</name>
        <dbReference type="ChEBI" id="CHEBI:456215"/>
    </ligand>
</feature>
<feature type="binding site" evidence="1">
    <location>
        <position position="242"/>
    </location>
    <ligand>
        <name>ATP</name>
        <dbReference type="ChEBI" id="CHEBI:30616"/>
    </ligand>
</feature>
<keyword id="KW-0067">ATP-binding</keyword>
<keyword id="KW-0963">Cytoplasm</keyword>
<keyword id="KW-0418">Kinase</keyword>
<keyword id="KW-0496">Mitochondrion</keyword>
<keyword id="KW-0547">Nucleotide-binding</keyword>
<keyword id="KW-1185">Reference proteome</keyword>
<keyword id="KW-0808">Transferase</keyword>
<name>KAD2_ASPNC</name>
<evidence type="ECO:0000255" key="1">
    <source>
        <dbReference type="HAMAP-Rule" id="MF_03168"/>
    </source>
</evidence>